<organism>
    <name type="scientific">Arabidopsis thaliana</name>
    <name type="common">Mouse-ear cress</name>
    <dbReference type="NCBI Taxonomy" id="3702"/>
    <lineage>
        <taxon>Eukaryota</taxon>
        <taxon>Viridiplantae</taxon>
        <taxon>Streptophyta</taxon>
        <taxon>Embryophyta</taxon>
        <taxon>Tracheophyta</taxon>
        <taxon>Spermatophyta</taxon>
        <taxon>Magnoliopsida</taxon>
        <taxon>eudicotyledons</taxon>
        <taxon>Gunneridae</taxon>
        <taxon>Pentapetalae</taxon>
        <taxon>rosids</taxon>
        <taxon>malvids</taxon>
        <taxon>Brassicales</taxon>
        <taxon>Brassicaceae</taxon>
        <taxon>Camelineae</taxon>
        <taxon>Arabidopsis</taxon>
    </lineage>
</organism>
<evidence type="ECO:0000250" key="1">
    <source>
        <dbReference type="UniProtKB" id="Q9FNE4"/>
    </source>
</evidence>
<evidence type="ECO:0000255" key="2">
    <source>
        <dbReference type="PROSITE-ProRule" id="PRU00162"/>
    </source>
</evidence>
<evidence type="ECO:0000255" key="3">
    <source>
        <dbReference type="PROSITE-ProRule" id="PRU00768"/>
    </source>
</evidence>
<evidence type="ECO:0000256" key="4">
    <source>
        <dbReference type="SAM" id="MobiDB-lite"/>
    </source>
</evidence>
<evidence type="ECO:0000269" key="5">
    <source>
    </source>
</evidence>
<evidence type="ECO:0000269" key="6">
    <source>
    </source>
</evidence>
<evidence type="ECO:0000303" key="7">
    <source>
    </source>
</evidence>
<evidence type="ECO:0000305" key="8"/>
<evidence type="ECO:0000312" key="9">
    <source>
        <dbReference type="Araport" id="AT3G09670"/>
    </source>
</evidence>
<evidence type="ECO:0000312" key="10">
    <source>
        <dbReference type="EMBL" id="AAF23297.1"/>
    </source>
</evidence>
<name>PDP2_ARATH</name>
<protein>
    <recommendedName>
        <fullName evidence="7">PWWP domain-containing protein 2</fullName>
    </recommendedName>
</protein>
<keyword id="KW-0287">Flowering</keyword>
<keyword id="KW-0539">Nucleus</keyword>
<keyword id="KW-1185">Reference proteome</keyword>
<keyword id="KW-0804">Transcription</keyword>
<keyword id="KW-0805">Transcription regulation</keyword>
<dbReference type="EMBL" id="AC016661">
    <property type="protein sequence ID" value="AAF23297.1"/>
    <property type="molecule type" value="Genomic_DNA"/>
</dbReference>
<dbReference type="EMBL" id="CP002686">
    <property type="protein sequence ID" value="AEE74795.1"/>
    <property type="molecule type" value="Genomic_DNA"/>
</dbReference>
<dbReference type="EMBL" id="CP002686">
    <property type="protein sequence ID" value="AEE74796.1"/>
    <property type="molecule type" value="Genomic_DNA"/>
</dbReference>
<dbReference type="EMBL" id="AK229716">
    <property type="protein sequence ID" value="BAF01554.1"/>
    <property type="molecule type" value="mRNA"/>
</dbReference>
<dbReference type="RefSeq" id="NP_001078128.1">
    <property type="nucleotide sequence ID" value="NM_001084659.1"/>
</dbReference>
<dbReference type="RefSeq" id="NP_187578.1">
    <property type="nucleotide sequence ID" value="NM_111801.5"/>
</dbReference>
<dbReference type="SMR" id="Q9SF36"/>
<dbReference type="FunCoup" id="Q9SF36">
    <property type="interactions" value="862"/>
</dbReference>
<dbReference type="IntAct" id="Q9SF36">
    <property type="interactions" value="1"/>
</dbReference>
<dbReference type="STRING" id="3702.Q9SF36"/>
<dbReference type="iPTMnet" id="Q9SF36"/>
<dbReference type="PaxDb" id="3702-AT3G09670.2"/>
<dbReference type="ProteomicsDB" id="189808"/>
<dbReference type="EnsemblPlants" id="AT3G09670.1">
    <property type="protein sequence ID" value="AT3G09670.1"/>
    <property type="gene ID" value="AT3G09670"/>
</dbReference>
<dbReference type="EnsemblPlants" id="AT3G09670.2">
    <property type="protein sequence ID" value="AT3G09670.2"/>
    <property type="gene ID" value="AT3G09670"/>
</dbReference>
<dbReference type="GeneID" id="820124"/>
<dbReference type="Gramene" id="AT3G09670.1">
    <property type="protein sequence ID" value="AT3G09670.1"/>
    <property type="gene ID" value="AT3G09670"/>
</dbReference>
<dbReference type="Gramene" id="AT3G09670.2">
    <property type="protein sequence ID" value="AT3G09670.2"/>
    <property type="gene ID" value="AT3G09670"/>
</dbReference>
<dbReference type="KEGG" id="ath:AT3G09670"/>
<dbReference type="Araport" id="AT3G09670"/>
<dbReference type="TAIR" id="AT3G09670">
    <property type="gene designation" value="PDP2"/>
</dbReference>
<dbReference type="eggNOG" id="ENOG502QTFR">
    <property type="taxonomic scope" value="Eukaryota"/>
</dbReference>
<dbReference type="HOGENOM" id="CLU_023067_0_0_1"/>
<dbReference type="InParanoid" id="Q9SF36"/>
<dbReference type="OMA" id="CKHDGVF"/>
<dbReference type="OrthoDB" id="62853at2759"/>
<dbReference type="PhylomeDB" id="Q9SF36"/>
<dbReference type="PRO" id="PR:Q9SF36"/>
<dbReference type="Proteomes" id="UP000006548">
    <property type="component" value="Chromosome 3"/>
</dbReference>
<dbReference type="ExpressionAtlas" id="Q9SF36">
    <property type="expression patterns" value="baseline and differential"/>
</dbReference>
<dbReference type="GO" id="GO:0035098">
    <property type="term" value="C:ESC/E(Z) complex"/>
    <property type="evidence" value="ECO:0000314"/>
    <property type="project" value="UniProtKB"/>
</dbReference>
<dbReference type="GO" id="GO:0040029">
    <property type="term" value="P:epigenetic regulation of gene expression"/>
    <property type="evidence" value="ECO:0000315"/>
    <property type="project" value="UniProtKB"/>
</dbReference>
<dbReference type="GO" id="GO:0009908">
    <property type="term" value="P:flower development"/>
    <property type="evidence" value="ECO:0007669"/>
    <property type="project" value="UniProtKB-KW"/>
</dbReference>
<dbReference type="GO" id="GO:0006355">
    <property type="term" value="P:regulation of DNA-templated transcription"/>
    <property type="evidence" value="ECO:0000315"/>
    <property type="project" value="UniProtKB"/>
</dbReference>
<dbReference type="GO" id="GO:2000028">
    <property type="term" value="P:regulation of photoperiodism, flowering"/>
    <property type="evidence" value="ECO:0000315"/>
    <property type="project" value="UniProtKB"/>
</dbReference>
<dbReference type="CDD" id="cd05162">
    <property type="entry name" value="PWWP"/>
    <property type="match status" value="1"/>
</dbReference>
<dbReference type="Gene3D" id="2.30.30.140">
    <property type="match status" value="1"/>
</dbReference>
<dbReference type="InterPro" id="IPR000313">
    <property type="entry name" value="PWWP_dom"/>
</dbReference>
<dbReference type="InterPro" id="IPR053063">
    <property type="entry name" value="PWWP_domain_containing_PDP"/>
</dbReference>
<dbReference type="PANTHER" id="PTHR42851">
    <property type="entry name" value="ALDOLASE-RELATED"/>
    <property type="match status" value="1"/>
</dbReference>
<dbReference type="PANTHER" id="PTHR42851:SF19">
    <property type="entry name" value="PWWP DOMAIN-CONTAINING PROTEIN 2-RELATED"/>
    <property type="match status" value="1"/>
</dbReference>
<dbReference type="Pfam" id="PF00855">
    <property type="entry name" value="PWWP"/>
    <property type="match status" value="1"/>
</dbReference>
<dbReference type="SMART" id="SM00293">
    <property type="entry name" value="PWWP"/>
    <property type="match status" value="1"/>
</dbReference>
<dbReference type="SUPFAM" id="SSF63748">
    <property type="entry name" value="Tudor/PWWP/MBT"/>
    <property type="match status" value="1"/>
</dbReference>
<dbReference type="PROSITE" id="PS50812">
    <property type="entry name" value="PWWP"/>
    <property type="match status" value="1"/>
</dbReference>
<sequence length="726" mass="79272">MSTESERIESVSEANASSLEVGNDQMSEALAGQAQELKTIGDDKEGCGNFASAGDNGMEKVNGFTNLVKETESVNGELDLGTRTENVGGESNQSDKKVLVDSEEVMMVEKRGLLVEKEVEPDMVCSHGADLSDVKVSDGRLDSEDLVQDRKPDGLEKQGTKVEDLDVVCFMGLEPHESKDESILDDEIAHVAAKVKISDSDLVWAKVRSHPWWPGQVFDASAATDKAKKHFKKGSFLVTYFGDCTFAWNEASRIKPFRQHFSQMAKQSSLPDFIDAIDFALEEVSRRIEFGLACSCISEEVYQKIKTQNVINPGIREDSSSIHGGDKVSSAVFFEPANLVGYVKRLACSPSYDATDALQLVSQRAQLLAFNRWKGYTDLPEFMTLQGSVESAPKISPAEEQSSLVEVSDPEPTKSKQVYTKRRKTNLQTEQSSLVEVSDPDKGDCKHDGVFEYEETIVPKKKEKTLAEFIAEKRVSRHNGNTSHEKSGNVPHCEKKRKVVQSKVPKSTKKIKANLQTEDPGSPVSPKNDRKNNLSAGDKITPQKARKSFGIGASILKVANQMHCSTPTRLLPCSDSTSKKAAKSNGSGKSLQEKPKAEALSAREISPSTTLSSPHAASVTKTTSGKSNSVSLDHNLSGELDQVRKEAPSTNLVEDPMLESRDLKDSSKEQVVHEDKKEAANVADEKSIMDSNLTGEKISGLDLREQPSNKNCSGGSDSCKEDVSAE</sequence>
<gene>
    <name evidence="7" type="primary">PDP2</name>
    <name evidence="9" type="ordered locus">At3g09670</name>
    <name evidence="10" type="ORF">F11F8.26</name>
</gene>
<feature type="chain" id="PRO_0000453270" description="PWWP domain-containing protein 2">
    <location>
        <begin position="1"/>
        <end position="726"/>
    </location>
</feature>
<feature type="domain" description="PWWP" evidence="2">
    <location>
        <begin position="199"/>
        <end position="260"/>
    </location>
</feature>
<feature type="region of interest" description="Disordered" evidence="4">
    <location>
        <begin position="1"/>
        <end position="26"/>
    </location>
</feature>
<feature type="region of interest" description="Disordered" evidence="4">
    <location>
        <begin position="392"/>
        <end position="441"/>
    </location>
</feature>
<feature type="region of interest" description="Disordered" evidence="4">
    <location>
        <begin position="472"/>
        <end position="545"/>
    </location>
</feature>
<feature type="region of interest" description="Disordered" evidence="4">
    <location>
        <begin position="568"/>
        <end position="726"/>
    </location>
</feature>
<feature type="short sequence motif" description="Nuclear localization signal 1" evidence="3">
    <location>
        <begin position="460"/>
        <end position="467"/>
    </location>
</feature>
<feature type="short sequence motif" description="Nuclear localization signal 2" evidence="3">
    <location>
        <begin position="495"/>
        <end position="502"/>
    </location>
</feature>
<feature type="compositionally biased region" description="Basic and acidic residues" evidence="4">
    <location>
        <begin position="1"/>
        <end position="10"/>
    </location>
</feature>
<feature type="compositionally biased region" description="Polar residues" evidence="4">
    <location>
        <begin position="12"/>
        <end position="26"/>
    </location>
</feature>
<feature type="compositionally biased region" description="Polar residues" evidence="4">
    <location>
        <begin position="426"/>
        <end position="435"/>
    </location>
</feature>
<feature type="compositionally biased region" description="Basic residues" evidence="4">
    <location>
        <begin position="494"/>
        <end position="512"/>
    </location>
</feature>
<feature type="compositionally biased region" description="Polar residues" evidence="4">
    <location>
        <begin position="606"/>
        <end position="634"/>
    </location>
</feature>
<feature type="compositionally biased region" description="Basic and acidic residues" evidence="4">
    <location>
        <begin position="658"/>
        <end position="688"/>
    </location>
</feature>
<feature type="sequence conflict" description="In Ref. 3; BAF01554." evidence="8" ref="3">
    <original>N</original>
    <variation>Y</variation>
    <location>
        <position position="309"/>
    </location>
</feature>
<comment type="function">
    <text evidence="6">Together with PDP1, PDP3 and PDP6, interacts with MSI4/FVE and MSI5 to suppress FLC, MAF4 and MAF5 expression by regulating the function of the PRC2 complex and modulating H3K27me3 level, thereby promoting flowering.</text>
</comment>
<comment type="subunit">
    <text evidence="1 5 6">Interacts with DEK3 (PubMed:25387881). Binds to MSI4/FVE and MSI5 (PubMed:29314758). Component of the PRC2 (polycomb repressive complex 2) complex which regulates histone methylation on histone H3K27 (By similarity).</text>
</comment>
<comment type="subcellular location">
    <subcellularLocation>
        <location evidence="3">Nucleus</location>
    </subcellularLocation>
</comment>
<comment type="disruption phenotype">
    <text evidence="6">Delayed flowering associated with reduced H3K27me3 level on FLC (PubMed:29314758). The triple mutant pdp1 pdp2 pdp3 has increased levels of FLC, MAF4 and MAF5 expression, but decreased expression of FT (PubMed:29314758).</text>
</comment>
<comment type="similarity">
    <text evidence="8">Belongs to the PDP family.</text>
</comment>
<proteinExistence type="evidence at protein level"/>
<accession>Q9SF36</accession>
<accession>Q0WMU6</accession>
<reference key="1">
    <citation type="journal article" date="2000" name="Nature">
        <title>Sequence and analysis of chromosome 3 of the plant Arabidopsis thaliana.</title>
        <authorList>
            <person name="Salanoubat M."/>
            <person name="Lemcke K."/>
            <person name="Rieger M."/>
            <person name="Ansorge W."/>
            <person name="Unseld M."/>
            <person name="Fartmann B."/>
            <person name="Valle G."/>
            <person name="Bloecker H."/>
            <person name="Perez-Alonso M."/>
            <person name="Obermaier B."/>
            <person name="Delseny M."/>
            <person name="Boutry M."/>
            <person name="Grivell L.A."/>
            <person name="Mache R."/>
            <person name="Puigdomenech P."/>
            <person name="De Simone V."/>
            <person name="Choisne N."/>
            <person name="Artiguenave F."/>
            <person name="Robert C."/>
            <person name="Brottier P."/>
            <person name="Wincker P."/>
            <person name="Cattolico L."/>
            <person name="Weissenbach J."/>
            <person name="Saurin W."/>
            <person name="Quetier F."/>
            <person name="Schaefer M."/>
            <person name="Mueller-Auer S."/>
            <person name="Gabel C."/>
            <person name="Fuchs M."/>
            <person name="Benes V."/>
            <person name="Wurmbach E."/>
            <person name="Drzonek H."/>
            <person name="Erfle H."/>
            <person name="Jordan N."/>
            <person name="Bangert S."/>
            <person name="Wiedelmann R."/>
            <person name="Kranz H."/>
            <person name="Voss H."/>
            <person name="Holland R."/>
            <person name="Brandt P."/>
            <person name="Nyakatura G."/>
            <person name="Vezzi A."/>
            <person name="D'Angelo M."/>
            <person name="Pallavicini A."/>
            <person name="Toppo S."/>
            <person name="Simionati B."/>
            <person name="Conrad A."/>
            <person name="Hornischer K."/>
            <person name="Kauer G."/>
            <person name="Loehnert T.-H."/>
            <person name="Nordsiek G."/>
            <person name="Reichelt J."/>
            <person name="Scharfe M."/>
            <person name="Schoen O."/>
            <person name="Bargues M."/>
            <person name="Terol J."/>
            <person name="Climent J."/>
            <person name="Navarro P."/>
            <person name="Collado C."/>
            <person name="Perez-Perez A."/>
            <person name="Ottenwaelder B."/>
            <person name="Duchemin D."/>
            <person name="Cooke R."/>
            <person name="Laudie M."/>
            <person name="Berger-Llauro C."/>
            <person name="Purnelle B."/>
            <person name="Masuy D."/>
            <person name="de Haan M."/>
            <person name="Maarse A.C."/>
            <person name="Alcaraz J.-P."/>
            <person name="Cottet A."/>
            <person name="Casacuberta E."/>
            <person name="Monfort A."/>
            <person name="Argiriou A."/>
            <person name="Flores M."/>
            <person name="Liguori R."/>
            <person name="Vitale D."/>
            <person name="Mannhaupt G."/>
            <person name="Haase D."/>
            <person name="Schoof H."/>
            <person name="Rudd S."/>
            <person name="Zaccaria P."/>
            <person name="Mewes H.-W."/>
            <person name="Mayer K.F.X."/>
            <person name="Kaul S."/>
            <person name="Town C.D."/>
            <person name="Koo H.L."/>
            <person name="Tallon L.J."/>
            <person name="Jenkins J."/>
            <person name="Rooney T."/>
            <person name="Rizzo M."/>
            <person name="Walts A."/>
            <person name="Utterback T."/>
            <person name="Fujii C.Y."/>
            <person name="Shea T.P."/>
            <person name="Creasy T.H."/>
            <person name="Haas B."/>
            <person name="Maiti R."/>
            <person name="Wu D."/>
            <person name="Peterson J."/>
            <person name="Van Aken S."/>
            <person name="Pai G."/>
            <person name="Militscher J."/>
            <person name="Sellers P."/>
            <person name="Gill J.E."/>
            <person name="Feldblyum T.V."/>
            <person name="Preuss D."/>
            <person name="Lin X."/>
            <person name="Nierman W.C."/>
            <person name="Salzberg S.L."/>
            <person name="White O."/>
            <person name="Venter J.C."/>
            <person name="Fraser C.M."/>
            <person name="Kaneko T."/>
            <person name="Nakamura Y."/>
            <person name="Sato S."/>
            <person name="Kato T."/>
            <person name="Asamizu E."/>
            <person name="Sasamoto S."/>
            <person name="Kimura T."/>
            <person name="Idesawa K."/>
            <person name="Kawashima K."/>
            <person name="Kishida Y."/>
            <person name="Kiyokawa C."/>
            <person name="Kohara M."/>
            <person name="Matsumoto M."/>
            <person name="Matsuno A."/>
            <person name="Muraki A."/>
            <person name="Nakayama S."/>
            <person name="Nakazaki N."/>
            <person name="Shinpo S."/>
            <person name="Takeuchi C."/>
            <person name="Wada T."/>
            <person name="Watanabe A."/>
            <person name="Yamada M."/>
            <person name="Yasuda M."/>
            <person name="Tabata S."/>
        </authorList>
    </citation>
    <scope>NUCLEOTIDE SEQUENCE [LARGE SCALE GENOMIC DNA]</scope>
    <source>
        <strain>cv. Columbia</strain>
    </source>
</reference>
<reference key="2">
    <citation type="journal article" date="2017" name="Plant J.">
        <title>Araport11: a complete reannotation of the Arabidopsis thaliana reference genome.</title>
        <authorList>
            <person name="Cheng C.Y."/>
            <person name="Krishnakumar V."/>
            <person name="Chan A.P."/>
            <person name="Thibaud-Nissen F."/>
            <person name="Schobel S."/>
            <person name="Town C.D."/>
        </authorList>
    </citation>
    <scope>GENOME REANNOTATION</scope>
    <source>
        <strain>cv. Columbia</strain>
    </source>
</reference>
<reference key="3">
    <citation type="submission" date="2006-07" db="EMBL/GenBank/DDBJ databases">
        <title>Large-scale analysis of RIKEN Arabidopsis full-length (RAFL) cDNAs.</title>
        <authorList>
            <person name="Totoki Y."/>
            <person name="Seki M."/>
            <person name="Ishida J."/>
            <person name="Nakajima M."/>
            <person name="Enju A."/>
            <person name="Kamiya A."/>
            <person name="Narusaka M."/>
            <person name="Shin-i T."/>
            <person name="Nakagawa M."/>
            <person name="Sakamoto N."/>
            <person name="Oishi K."/>
            <person name="Kohara Y."/>
            <person name="Kobayashi M."/>
            <person name="Toyoda A."/>
            <person name="Sakaki Y."/>
            <person name="Sakurai T."/>
            <person name="Iida K."/>
            <person name="Akiyama K."/>
            <person name="Satou M."/>
            <person name="Toyoda T."/>
            <person name="Konagaya A."/>
            <person name="Carninci P."/>
            <person name="Kawai J."/>
            <person name="Hayashizaki Y."/>
            <person name="Shinozaki K."/>
        </authorList>
    </citation>
    <scope>NUCLEOTIDE SEQUENCE [LARGE SCALE MRNA]</scope>
    <source>
        <strain>cv. Columbia</strain>
    </source>
</reference>
<reference key="4">
    <citation type="journal article" date="2009" name="J. Proteomics">
        <title>Phosphoproteomic analysis of nuclei-enriched fractions from Arabidopsis thaliana.</title>
        <authorList>
            <person name="Jones A.M.E."/>
            <person name="MacLean D."/>
            <person name="Studholme D.J."/>
            <person name="Serna-Sanz A."/>
            <person name="Andreasson E."/>
            <person name="Rathjen J.P."/>
            <person name="Peck S.C."/>
        </authorList>
    </citation>
    <scope>IDENTIFICATION BY MASS SPECTROMETRY [LARGE SCALE ANALYSIS]</scope>
</reference>
<reference key="5">
    <citation type="journal article" date="2014" name="Plant Cell">
        <title>A DEK domain-containing protein modulates chromatin structure and function in Arabidopsis.</title>
        <authorList>
            <person name="Waidmann S."/>
            <person name="Kusenda B."/>
            <person name="Mayerhofer J."/>
            <person name="Mechtler K."/>
            <person name="Jonak C."/>
        </authorList>
    </citation>
    <scope>INTERACTION WITH DEK3</scope>
    <scope>IDENTIFICATION BY MASS SPECTROMETRY</scope>
    <source>
        <strain>cv. Columbia</strain>
    </source>
</reference>
<reference key="6">
    <citation type="journal article" date="2018" name="J. Integr. Plant Biol.">
        <title>Arabidopsis PWWP domain proteins mediate H3K27 trimethylation on FLC and regulate flowering time.</title>
        <authorList>
            <person name="Zhou J.X."/>
            <person name="Liu Z.W."/>
            <person name="Li Y.Q."/>
            <person name="Li L."/>
            <person name="Wang B."/>
            <person name="Chen S."/>
            <person name="He X.J."/>
        </authorList>
    </citation>
    <scope>FUNCTION</scope>
    <scope>DISRUPTION PHENOTYPE</scope>
    <scope>INTERACTION WITH MSI4/FVE AND MSI5</scope>
    <scope>SUBUNIT</scope>
    <scope>GENE FAMILY</scope>
    <scope>NOMENCLATURE</scope>
</reference>